<organism>
    <name type="scientific">Ruminiclostridium cellulolyticum (strain ATCC 35319 / DSM 5812 / JCM 6584 / H10)</name>
    <name type="common">Clostridium cellulolyticum</name>
    <dbReference type="NCBI Taxonomy" id="394503"/>
    <lineage>
        <taxon>Bacteria</taxon>
        <taxon>Bacillati</taxon>
        <taxon>Bacillota</taxon>
        <taxon>Clostridia</taxon>
        <taxon>Eubacteriales</taxon>
        <taxon>Oscillospiraceae</taxon>
        <taxon>Ruminiclostridium</taxon>
    </lineage>
</organism>
<evidence type="ECO:0000255" key="1">
    <source>
        <dbReference type="HAMAP-Rule" id="MF_00044"/>
    </source>
</evidence>
<protein>
    <recommendedName>
        <fullName evidence="1">Aspartate--tRNA ligase</fullName>
        <ecNumber evidence="1">6.1.1.12</ecNumber>
    </recommendedName>
    <alternativeName>
        <fullName evidence="1">Aspartyl-tRNA synthetase</fullName>
        <shortName evidence="1">AspRS</shortName>
    </alternativeName>
</protein>
<accession>B8I3F1</accession>
<gene>
    <name evidence="1" type="primary">aspS</name>
    <name type="ordered locus">Ccel_1946</name>
</gene>
<reference key="1">
    <citation type="submission" date="2009-01" db="EMBL/GenBank/DDBJ databases">
        <title>Complete sequence of Clostridium cellulolyticum H10.</title>
        <authorList>
            <consortium name="US DOE Joint Genome Institute"/>
            <person name="Lucas S."/>
            <person name="Copeland A."/>
            <person name="Lapidus A."/>
            <person name="Glavina del Rio T."/>
            <person name="Dalin E."/>
            <person name="Tice H."/>
            <person name="Bruce D."/>
            <person name="Goodwin L."/>
            <person name="Pitluck S."/>
            <person name="Chertkov O."/>
            <person name="Saunders E."/>
            <person name="Brettin T."/>
            <person name="Detter J.C."/>
            <person name="Han C."/>
            <person name="Larimer F."/>
            <person name="Land M."/>
            <person name="Hauser L."/>
            <person name="Kyrpides N."/>
            <person name="Ivanova N."/>
            <person name="Zhou J."/>
            <person name="Richardson P."/>
        </authorList>
    </citation>
    <scope>NUCLEOTIDE SEQUENCE [LARGE SCALE GENOMIC DNA]</scope>
    <source>
        <strain>ATCC 35319 / DSM 5812 / JCM 6584 / H10</strain>
    </source>
</reference>
<comment type="function">
    <text evidence="1">Catalyzes the attachment of L-aspartate to tRNA(Asp) in a two-step reaction: L-aspartate is first activated by ATP to form Asp-AMP and then transferred to the acceptor end of tRNA(Asp).</text>
</comment>
<comment type="catalytic activity">
    <reaction evidence="1">
        <text>tRNA(Asp) + L-aspartate + ATP = L-aspartyl-tRNA(Asp) + AMP + diphosphate</text>
        <dbReference type="Rhea" id="RHEA:19649"/>
        <dbReference type="Rhea" id="RHEA-COMP:9660"/>
        <dbReference type="Rhea" id="RHEA-COMP:9678"/>
        <dbReference type="ChEBI" id="CHEBI:29991"/>
        <dbReference type="ChEBI" id="CHEBI:30616"/>
        <dbReference type="ChEBI" id="CHEBI:33019"/>
        <dbReference type="ChEBI" id="CHEBI:78442"/>
        <dbReference type="ChEBI" id="CHEBI:78516"/>
        <dbReference type="ChEBI" id="CHEBI:456215"/>
        <dbReference type="EC" id="6.1.1.12"/>
    </reaction>
</comment>
<comment type="subunit">
    <text evidence="1">Homodimer.</text>
</comment>
<comment type="subcellular location">
    <subcellularLocation>
        <location evidence="1">Cytoplasm</location>
    </subcellularLocation>
</comment>
<comment type="similarity">
    <text evidence="1">Belongs to the class-II aminoacyl-tRNA synthetase family. Type 1 subfamily.</text>
</comment>
<name>SYD_RUMCH</name>
<keyword id="KW-0030">Aminoacyl-tRNA synthetase</keyword>
<keyword id="KW-0067">ATP-binding</keyword>
<keyword id="KW-0963">Cytoplasm</keyword>
<keyword id="KW-0436">Ligase</keyword>
<keyword id="KW-0547">Nucleotide-binding</keyword>
<keyword id="KW-0648">Protein biosynthesis</keyword>
<keyword id="KW-1185">Reference proteome</keyword>
<dbReference type="EC" id="6.1.1.12" evidence="1"/>
<dbReference type="EMBL" id="CP001348">
    <property type="protein sequence ID" value="ACL76294.1"/>
    <property type="molecule type" value="Genomic_DNA"/>
</dbReference>
<dbReference type="RefSeq" id="WP_015925398.1">
    <property type="nucleotide sequence ID" value="NC_011898.1"/>
</dbReference>
<dbReference type="SMR" id="B8I3F1"/>
<dbReference type="STRING" id="394503.Ccel_1946"/>
<dbReference type="KEGG" id="cce:Ccel_1946"/>
<dbReference type="eggNOG" id="COG0173">
    <property type="taxonomic scope" value="Bacteria"/>
</dbReference>
<dbReference type="HOGENOM" id="CLU_014330_3_2_9"/>
<dbReference type="OrthoDB" id="9802326at2"/>
<dbReference type="Proteomes" id="UP000001349">
    <property type="component" value="Chromosome"/>
</dbReference>
<dbReference type="GO" id="GO:0005737">
    <property type="term" value="C:cytoplasm"/>
    <property type="evidence" value="ECO:0007669"/>
    <property type="project" value="UniProtKB-SubCell"/>
</dbReference>
<dbReference type="GO" id="GO:0004815">
    <property type="term" value="F:aspartate-tRNA ligase activity"/>
    <property type="evidence" value="ECO:0007669"/>
    <property type="project" value="UniProtKB-UniRule"/>
</dbReference>
<dbReference type="GO" id="GO:0005524">
    <property type="term" value="F:ATP binding"/>
    <property type="evidence" value="ECO:0007669"/>
    <property type="project" value="UniProtKB-UniRule"/>
</dbReference>
<dbReference type="GO" id="GO:0140096">
    <property type="term" value="F:catalytic activity, acting on a protein"/>
    <property type="evidence" value="ECO:0007669"/>
    <property type="project" value="UniProtKB-ARBA"/>
</dbReference>
<dbReference type="GO" id="GO:0003676">
    <property type="term" value="F:nucleic acid binding"/>
    <property type="evidence" value="ECO:0007669"/>
    <property type="project" value="InterPro"/>
</dbReference>
<dbReference type="GO" id="GO:0016740">
    <property type="term" value="F:transferase activity"/>
    <property type="evidence" value="ECO:0007669"/>
    <property type="project" value="UniProtKB-ARBA"/>
</dbReference>
<dbReference type="GO" id="GO:0006422">
    <property type="term" value="P:aspartyl-tRNA aminoacylation"/>
    <property type="evidence" value="ECO:0007669"/>
    <property type="project" value="UniProtKB-UniRule"/>
</dbReference>
<dbReference type="CDD" id="cd00777">
    <property type="entry name" value="AspRS_core"/>
    <property type="match status" value="1"/>
</dbReference>
<dbReference type="CDD" id="cd04317">
    <property type="entry name" value="EcAspRS_like_N"/>
    <property type="match status" value="1"/>
</dbReference>
<dbReference type="Gene3D" id="3.30.930.10">
    <property type="entry name" value="Bira Bifunctional Protein, Domain 2"/>
    <property type="match status" value="1"/>
</dbReference>
<dbReference type="Gene3D" id="3.30.1360.30">
    <property type="entry name" value="GAD-like domain"/>
    <property type="match status" value="1"/>
</dbReference>
<dbReference type="Gene3D" id="2.40.50.140">
    <property type="entry name" value="Nucleic acid-binding proteins"/>
    <property type="match status" value="1"/>
</dbReference>
<dbReference type="HAMAP" id="MF_00044">
    <property type="entry name" value="Asp_tRNA_synth_type1"/>
    <property type="match status" value="1"/>
</dbReference>
<dbReference type="InterPro" id="IPR004364">
    <property type="entry name" value="Aa-tRNA-synt_II"/>
</dbReference>
<dbReference type="InterPro" id="IPR006195">
    <property type="entry name" value="aa-tRNA-synth_II"/>
</dbReference>
<dbReference type="InterPro" id="IPR045864">
    <property type="entry name" value="aa-tRNA-synth_II/BPL/LPL"/>
</dbReference>
<dbReference type="InterPro" id="IPR004524">
    <property type="entry name" value="Asp-tRNA-ligase_1"/>
</dbReference>
<dbReference type="InterPro" id="IPR047089">
    <property type="entry name" value="Asp-tRNA-ligase_1_N"/>
</dbReference>
<dbReference type="InterPro" id="IPR002312">
    <property type="entry name" value="Asp/Asn-tRNA-synth_IIb"/>
</dbReference>
<dbReference type="InterPro" id="IPR047090">
    <property type="entry name" value="AspRS_core"/>
</dbReference>
<dbReference type="InterPro" id="IPR004115">
    <property type="entry name" value="GAD-like_sf"/>
</dbReference>
<dbReference type="InterPro" id="IPR029351">
    <property type="entry name" value="GAD_dom"/>
</dbReference>
<dbReference type="InterPro" id="IPR012340">
    <property type="entry name" value="NA-bd_OB-fold"/>
</dbReference>
<dbReference type="InterPro" id="IPR004365">
    <property type="entry name" value="NA-bd_OB_tRNA"/>
</dbReference>
<dbReference type="NCBIfam" id="TIGR00459">
    <property type="entry name" value="aspS_bact"/>
    <property type="match status" value="1"/>
</dbReference>
<dbReference type="NCBIfam" id="NF001750">
    <property type="entry name" value="PRK00476.1"/>
    <property type="match status" value="1"/>
</dbReference>
<dbReference type="PANTHER" id="PTHR22594:SF5">
    <property type="entry name" value="ASPARTATE--TRNA LIGASE, MITOCHONDRIAL"/>
    <property type="match status" value="1"/>
</dbReference>
<dbReference type="PANTHER" id="PTHR22594">
    <property type="entry name" value="ASPARTYL/LYSYL-TRNA SYNTHETASE"/>
    <property type="match status" value="1"/>
</dbReference>
<dbReference type="Pfam" id="PF02938">
    <property type="entry name" value="GAD"/>
    <property type="match status" value="1"/>
</dbReference>
<dbReference type="Pfam" id="PF00152">
    <property type="entry name" value="tRNA-synt_2"/>
    <property type="match status" value="1"/>
</dbReference>
<dbReference type="Pfam" id="PF01336">
    <property type="entry name" value="tRNA_anti-codon"/>
    <property type="match status" value="1"/>
</dbReference>
<dbReference type="PRINTS" id="PR01042">
    <property type="entry name" value="TRNASYNTHASP"/>
</dbReference>
<dbReference type="SUPFAM" id="SSF55681">
    <property type="entry name" value="Class II aaRS and biotin synthetases"/>
    <property type="match status" value="1"/>
</dbReference>
<dbReference type="SUPFAM" id="SSF55261">
    <property type="entry name" value="GAD domain-like"/>
    <property type="match status" value="1"/>
</dbReference>
<dbReference type="SUPFAM" id="SSF50249">
    <property type="entry name" value="Nucleic acid-binding proteins"/>
    <property type="match status" value="1"/>
</dbReference>
<dbReference type="PROSITE" id="PS50862">
    <property type="entry name" value="AA_TRNA_LIGASE_II"/>
    <property type="match status" value="1"/>
</dbReference>
<feature type="chain" id="PRO_1000198972" description="Aspartate--tRNA ligase">
    <location>
        <begin position="1"/>
        <end position="593"/>
    </location>
</feature>
<feature type="region of interest" description="Aspartate" evidence="1">
    <location>
        <begin position="205"/>
        <end position="208"/>
    </location>
</feature>
<feature type="binding site" evidence="1">
    <location>
        <position position="181"/>
    </location>
    <ligand>
        <name>L-aspartate</name>
        <dbReference type="ChEBI" id="CHEBI:29991"/>
    </ligand>
</feature>
<feature type="binding site" evidence="1">
    <location>
        <begin position="227"/>
        <end position="229"/>
    </location>
    <ligand>
        <name>ATP</name>
        <dbReference type="ChEBI" id="CHEBI:30616"/>
    </ligand>
</feature>
<feature type="binding site" evidence="1">
    <location>
        <position position="227"/>
    </location>
    <ligand>
        <name>L-aspartate</name>
        <dbReference type="ChEBI" id="CHEBI:29991"/>
    </ligand>
</feature>
<feature type="binding site" evidence="1">
    <location>
        <position position="236"/>
    </location>
    <ligand>
        <name>ATP</name>
        <dbReference type="ChEBI" id="CHEBI:30616"/>
    </ligand>
</feature>
<feature type="binding site" evidence="1">
    <location>
        <position position="455"/>
    </location>
    <ligand>
        <name>L-aspartate</name>
        <dbReference type="ChEBI" id="CHEBI:29991"/>
    </ligand>
</feature>
<feature type="binding site" evidence="1">
    <location>
        <position position="489"/>
    </location>
    <ligand>
        <name>ATP</name>
        <dbReference type="ChEBI" id="CHEBI:30616"/>
    </ligand>
</feature>
<feature type="binding site" evidence="1">
    <location>
        <position position="496"/>
    </location>
    <ligand>
        <name>L-aspartate</name>
        <dbReference type="ChEBI" id="CHEBI:29991"/>
    </ligand>
</feature>
<feature type="binding site" evidence="1">
    <location>
        <begin position="541"/>
        <end position="544"/>
    </location>
    <ligand>
        <name>ATP</name>
        <dbReference type="ChEBI" id="CHEBI:30616"/>
    </ligand>
</feature>
<sequence length="593" mass="67256">MGESIHGLERSHKCTELSSSNIGEKVTVMGWVQKQRNLGSLVFIDLRDRTGIVQLVFTDKDGEMFDKAKTIRSEYVIATVGTVAARSAEAVNKKMATGEIEIIASELRILSSSETPPMYIEENSDVNEQTRLKYRFLDLRRPDMQRNLILRHRVAKVARDYYDQNGFLEIETPILIKSTPEGARDYLVPSRVHPGKFFALPQSPQLYKQLLMVSGYDRYFQIAKCFRDEDLRADRQPEFTQIDIEMSFVNVDDVLEVNEGFVKKAFKEALGVDVETPFTRMPYAEAMERFGSDKPDIRFGMELVNMSDLVANCGFKVFTDAVAMGGSVRAINAKGCAKFSRKEIDALVDLVKTYKAKGMAWISISQENEIKSSFAKFMSEDEMKAILNRAQAEAGDLICFVADKNNVVFDALGQLRLEIARKLDILNPDEFKFLWVTEFPLFEYDEEDQRWAAKHHPFTSPMDEDLQYLDTDPGRVRAKAYDMVLNGVELGGGSIRIHIQELQAKMFKMLGFTEEDANRKFGFLLEAFKYGTPPHGGMAFGLDRLVMLMAKRNSIRDVIAFPKVQNASCPMSNAPDVVDETQIEELHISIAKE</sequence>
<proteinExistence type="inferred from homology"/>